<evidence type="ECO:0000250" key="1"/>
<evidence type="ECO:0000255" key="2">
    <source>
        <dbReference type="PROSITE-ProRule" id="PRU00108"/>
    </source>
</evidence>
<evidence type="ECO:0000269" key="3">
    <source>
    </source>
</evidence>
<evidence type="ECO:0000305" key="4"/>
<dbReference type="EMBL" id="AF071254">
    <property type="protein sequence ID" value="AAD15947.1"/>
    <property type="molecule type" value="Genomic_DNA"/>
</dbReference>
<dbReference type="EMBL" id="AL645798">
    <property type="protein sequence ID" value="CAD44457.1"/>
    <property type="molecule type" value="Genomic_DNA"/>
</dbReference>
<dbReference type="EMBL" id="DQ060548">
    <property type="protein sequence ID" value="AAY67926.1"/>
    <property type="molecule type" value="mRNA"/>
</dbReference>
<dbReference type="EMBL" id="Y14532">
    <property type="protein sequence ID" value="CAA74867.1"/>
    <property type="molecule type" value="mRNA"/>
</dbReference>
<dbReference type="SMR" id="Q9YGT4"/>
<dbReference type="FunCoup" id="Q9YGT4">
    <property type="interactions" value="241"/>
</dbReference>
<dbReference type="STRING" id="7955.ENSDARP00000010277"/>
<dbReference type="PaxDb" id="7955-ENSDARP00000010277"/>
<dbReference type="AGR" id="ZFIN:ZDB-GENE-000823-7"/>
<dbReference type="ZFIN" id="ZDB-GENE-000823-7">
    <property type="gene designation" value="hoxb6b"/>
</dbReference>
<dbReference type="eggNOG" id="KOG0489">
    <property type="taxonomic scope" value="Eukaryota"/>
</dbReference>
<dbReference type="InParanoid" id="Q9YGT4"/>
<dbReference type="PhylomeDB" id="Q9YGT4"/>
<dbReference type="PRO" id="PR:Q9YGT4"/>
<dbReference type="Proteomes" id="UP000000437">
    <property type="component" value="Unplaced"/>
</dbReference>
<dbReference type="GO" id="GO:0005634">
    <property type="term" value="C:nucleus"/>
    <property type="evidence" value="ECO:0000318"/>
    <property type="project" value="GO_Central"/>
</dbReference>
<dbReference type="GO" id="GO:0000981">
    <property type="term" value="F:DNA-binding transcription factor activity, RNA polymerase II-specific"/>
    <property type="evidence" value="ECO:0000318"/>
    <property type="project" value="GO_Central"/>
</dbReference>
<dbReference type="GO" id="GO:0000978">
    <property type="term" value="F:RNA polymerase II cis-regulatory region sequence-specific DNA binding"/>
    <property type="evidence" value="ECO:0000318"/>
    <property type="project" value="GO_Central"/>
</dbReference>
<dbReference type="GO" id="GO:0009952">
    <property type="term" value="P:anterior/posterior pattern specification"/>
    <property type="evidence" value="ECO:0000318"/>
    <property type="project" value="GO_Central"/>
</dbReference>
<dbReference type="GO" id="GO:0006357">
    <property type="term" value="P:regulation of transcription by RNA polymerase II"/>
    <property type="evidence" value="ECO:0000318"/>
    <property type="project" value="GO_Central"/>
</dbReference>
<dbReference type="CDD" id="cd00086">
    <property type="entry name" value="homeodomain"/>
    <property type="match status" value="1"/>
</dbReference>
<dbReference type="FunFam" id="1.10.10.60:FF:000017">
    <property type="entry name" value="Homeobox protein antennapedia"/>
    <property type="match status" value="1"/>
</dbReference>
<dbReference type="Gene3D" id="1.10.10.60">
    <property type="entry name" value="Homeodomain-like"/>
    <property type="match status" value="1"/>
</dbReference>
<dbReference type="InterPro" id="IPR050296">
    <property type="entry name" value="Antp_homeobox"/>
</dbReference>
<dbReference type="InterPro" id="IPR001356">
    <property type="entry name" value="HD"/>
</dbReference>
<dbReference type="InterPro" id="IPR020479">
    <property type="entry name" value="HD_metazoa"/>
</dbReference>
<dbReference type="InterPro" id="IPR017995">
    <property type="entry name" value="Homeobox_antennapedia"/>
</dbReference>
<dbReference type="InterPro" id="IPR001827">
    <property type="entry name" value="Homeobox_Antennapedia_CS"/>
</dbReference>
<dbReference type="InterPro" id="IPR017970">
    <property type="entry name" value="Homeobox_CS"/>
</dbReference>
<dbReference type="InterPro" id="IPR009057">
    <property type="entry name" value="Homeodomain-like_sf"/>
</dbReference>
<dbReference type="PANTHER" id="PTHR45659">
    <property type="entry name" value="HOMEOBOX PROTEIN HOX"/>
    <property type="match status" value="1"/>
</dbReference>
<dbReference type="PANTHER" id="PTHR45659:SF9">
    <property type="entry name" value="HOMEOBOX PROTEIN HOX-B6"/>
    <property type="match status" value="1"/>
</dbReference>
<dbReference type="Pfam" id="PF00046">
    <property type="entry name" value="Homeodomain"/>
    <property type="match status" value="1"/>
</dbReference>
<dbReference type="PRINTS" id="PR00025">
    <property type="entry name" value="ANTENNAPEDIA"/>
</dbReference>
<dbReference type="PRINTS" id="PR00024">
    <property type="entry name" value="HOMEOBOX"/>
</dbReference>
<dbReference type="SMART" id="SM00389">
    <property type="entry name" value="HOX"/>
    <property type="match status" value="1"/>
</dbReference>
<dbReference type="SUPFAM" id="SSF46689">
    <property type="entry name" value="Homeodomain-like"/>
    <property type="match status" value="1"/>
</dbReference>
<dbReference type="PROSITE" id="PS00032">
    <property type="entry name" value="ANTENNAPEDIA"/>
    <property type="match status" value="1"/>
</dbReference>
<dbReference type="PROSITE" id="PS00027">
    <property type="entry name" value="HOMEOBOX_1"/>
    <property type="match status" value="1"/>
</dbReference>
<dbReference type="PROSITE" id="PS50071">
    <property type="entry name" value="HOMEOBOX_2"/>
    <property type="match status" value="1"/>
</dbReference>
<organism>
    <name type="scientific">Danio rerio</name>
    <name type="common">Zebrafish</name>
    <name type="synonym">Brachydanio rerio</name>
    <dbReference type="NCBI Taxonomy" id="7955"/>
    <lineage>
        <taxon>Eukaryota</taxon>
        <taxon>Metazoa</taxon>
        <taxon>Chordata</taxon>
        <taxon>Craniata</taxon>
        <taxon>Vertebrata</taxon>
        <taxon>Euteleostomi</taxon>
        <taxon>Actinopterygii</taxon>
        <taxon>Neopterygii</taxon>
        <taxon>Teleostei</taxon>
        <taxon>Ostariophysi</taxon>
        <taxon>Cypriniformes</taxon>
        <taxon>Danionidae</taxon>
        <taxon>Danioninae</taxon>
        <taxon>Danio</taxon>
    </lineage>
</organism>
<accession>Q9YGT4</accession>
<accession>O57356</accession>
<accession>Q4PR95</accession>
<accession>Q8JH54</accession>
<feature type="chain" id="PRO_0000200139" description="Homeobox protein Hox-B6b">
    <location>
        <begin position="1"/>
        <end position="224"/>
    </location>
</feature>
<feature type="DNA-binding region" description="Homeobox" evidence="2">
    <location>
        <begin position="147"/>
        <end position="206"/>
    </location>
</feature>
<feature type="short sequence motif" description="Antp-type hexapeptide">
    <location>
        <begin position="129"/>
        <end position="134"/>
    </location>
</feature>
<feature type="sequence conflict" description="In Ref. 1." evidence="4" ref="1">
    <original>VSDEEDGGKAG</original>
    <variation>SAMRKMVERLDKCKKAYDEALETLYITCRM</variation>
    <location>
        <begin position="214"/>
        <end position="224"/>
    </location>
</feature>
<protein>
    <recommendedName>
        <fullName>Homeobox protein Hox-B6b</fullName>
    </recommendedName>
    <alternativeName>
        <fullName>Homeobox protein Hox-A7</fullName>
    </alternativeName>
</protein>
<keyword id="KW-0217">Developmental protein</keyword>
<keyword id="KW-0238">DNA-binding</keyword>
<keyword id="KW-0371">Homeobox</keyword>
<keyword id="KW-0539">Nucleus</keyword>
<keyword id="KW-1185">Reference proteome</keyword>
<keyword id="KW-0804">Transcription</keyword>
<keyword id="KW-0805">Transcription regulation</keyword>
<proteinExistence type="evidence at transcript level"/>
<reference key="1">
    <citation type="journal article" date="1998" name="Science">
        <title>Zebrafish hox clusters and vertebrate genome evolution.</title>
        <authorList>
            <person name="Amores A."/>
            <person name="Force A."/>
            <person name="Yan Y.-L."/>
            <person name="Joly L."/>
            <person name="Amemiya C."/>
            <person name="Fritz A."/>
            <person name="Ho R.K."/>
            <person name="Langeland J."/>
            <person name="Prince V.E."/>
            <person name="Wang Y.-L."/>
            <person name="Westerfield M."/>
            <person name="Ekker M."/>
            <person name="Postlethwait J.H."/>
        </authorList>
    </citation>
    <scope>NUCLEOTIDE SEQUENCE [GENOMIC DNA]</scope>
</reference>
<reference key="2">
    <citation type="journal article" date="2013" name="Nature">
        <title>The zebrafish reference genome sequence and its relationship to the human genome.</title>
        <authorList>
            <person name="Howe K."/>
            <person name="Clark M.D."/>
            <person name="Torroja C.F."/>
            <person name="Torrance J."/>
            <person name="Berthelot C."/>
            <person name="Muffato M."/>
            <person name="Collins J.E."/>
            <person name="Humphray S."/>
            <person name="McLaren K."/>
            <person name="Matthews L."/>
            <person name="McLaren S."/>
            <person name="Sealy I."/>
            <person name="Caccamo M."/>
            <person name="Churcher C."/>
            <person name="Scott C."/>
            <person name="Barrett J.C."/>
            <person name="Koch R."/>
            <person name="Rauch G.J."/>
            <person name="White S."/>
            <person name="Chow W."/>
            <person name="Kilian B."/>
            <person name="Quintais L.T."/>
            <person name="Guerra-Assuncao J.A."/>
            <person name="Zhou Y."/>
            <person name="Gu Y."/>
            <person name="Yen J."/>
            <person name="Vogel J.H."/>
            <person name="Eyre T."/>
            <person name="Redmond S."/>
            <person name="Banerjee R."/>
            <person name="Chi J."/>
            <person name="Fu B."/>
            <person name="Langley E."/>
            <person name="Maguire S.F."/>
            <person name="Laird G.K."/>
            <person name="Lloyd D."/>
            <person name="Kenyon E."/>
            <person name="Donaldson S."/>
            <person name="Sehra H."/>
            <person name="Almeida-King J."/>
            <person name="Loveland J."/>
            <person name="Trevanion S."/>
            <person name="Jones M."/>
            <person name="Quail M."/>
            <person name="Willey D."/>
            <person name="Hunt A."/>
            <person name="Burton J."/>
            <person name="Sims S."/>
            <person name="McLay K."/>
            <person name="Plumb B."/>
            <person name="Davis J."/>
            <person name="Clee C."/>
            <person name="Oliver K."/>
            <person name="Clark R."/>
            <person name="Riddle C."/>
            <person name="Elliot D."/>
            <person name="Threadgold G."/>
            <person name="Harden G."/>
            <person name="Ware D."/>
            <person name="Begum S."/>
            <person name="Mortimore B."/>
            <person name="Kerry G."/>
            <person name="Heath P."/>
            <person name="Phillimore B."/>
            <person name="Tracey A."/>
            <person name="Corby N."/>
            <person name="Dunn M."/>
            <person name="Johnson C."/>
            <person name="Wood J."/>
            <person name="Clark S."/>
            <person name="Pelan S."/>
            <person name="Griffiths G."/>
            <person name="Smith M."/>
            <person name="Glithero R."/>
            <person name="Howden P."/>
            <person name="Barker N."/>
            <person name="Lloyd C."/>
            <person name="Stevens C."/>
            <person name="Harley J."/>
            <person name="Holt K."/>
            <person name="Panagiotidis G."/>
            <person name="Lovell J."/>
            <person name="Beasley H."/>
            <person name="Henderson C."/>
            <person name="Gordon D."/>
            <person name="Auger K."/>
            <person name="Wright D."/>
            <person name="Collins J."/>
            <person name="Raisen C."/>
            <person name="Dyer L."/>
            <person name="Leung K."/>
            <person name="Robertson L."/>
            <person name="Ambridge K."/>
            <person name="Leongamornlert D."/>
            <person name="McGuire S."/>
            <person name="Gilderthorp R."/>
            <person name="Griffiths C."/>
            <person name="Manthravadi D."/>
            <person name="Nichol S."/>
            <person name="Barker G."/>
            <person name="Whitehead S."/>
            <person name="Kay M."/>
            <person name="Brown J."/>
            <person name="Murnane C."/>
            <person name="Gray E."/>
            <person name="Humphries M."/>
            <person name="Sycamore N."/>
            <person name="Barker D."/>
            <person name="Saunders D."/>
            <person name="Wallis J."/>
            <person name="Babbage A."/>
            <person name="Hammond S."/>
            <person name="Mashreghi-Mohammadi M."/>
            <person name="Barr L."/>
            <person name="Martin S."/>
            <person name="Wray P."/>
            <person name="Ellington A."/>
            <person name="Matthews N."/>
            <person name="Ellwood M."/>
            <person name="Woodmansey R."/>
            <person name="Clark G."/>
            <person name="Cooper J."/>
            <person name="Tromans A."/>
            <person name="Grafham D."/>
            <person name="Skuce C."/>
            <person name="Pandian R."/>
            <person name="Andrews R."/>
            <person name="Harrison E."/>
            <person name="Kimberley A."/>
            <person name="Garnett J."/>
            <person name="Fosker N."/>
            <person name="Hall R."/>
            <person name="Garner P."/>
            <person name="Kelly D."/>
            <person name="Bird C."/>
            <person name="Palmer S."/>
            <person name="Gehring I."/>
            <person name="Berger A."/>
            <person name="Dooley C.M."/>
            <person name="Ersan-Urun Z."/>
            <person name="Eser C."/>
            <person name="Geiger H."/>
            <person name="Geisler M."/>
            <person name="Karotki L."/>
            <person name="Kirn A."/>
            <person name="Konantz J."/>
            <person name="Konantz M."/>
            <person name="Oberlander M."/>
            <person name="Rudolph-Geiger S."/>
            <person name="Teucke M."/>
            <person name="Lanz C."/>
            <person name="Raddatz G."/>
            <person name="Osoegawa K."/>
            <person name="Zhu B."/>
            <person name="Rapp A."/>
            <person name="Widaa S."/>
            <person name="Langford C."/>
            <person name="Yang F."/>
            <person name="Schuster S.C."/>
            <person name="Carter N.P."/>
            <person name="Harrow J."/>
            <person name="Ning Z."/>
            <person name="Herrero J."/>
            <person name="Searle S.M."/>
            <person name="Enright A."/>
            <person name="Geisler R."/>
            <person name="Plasterk R.H."/>
            <person name="Lee C."/>
            <person name="Westerfield M."/>
            <person name="de Jong P.J."/>
            <person name="Zon L.I."/>
            <person name="Postlethwait J.H."/>
            <person name="Nusslein-Volhard C."/>
            <person name="Hubbard T.J."/>
            <person name="Roest Crollius H."/>
            <person name="Rogers J."/>
            <person name="Stemple D.L."/>
        </authorList>
    </citation>
    <scope>NUCLEOTIDE SEQUENCE [LARGE SCALE GENOMIC DNA]</scope>
    <source>
        <strain>Tuebingen</strain>
    </source>
</reference>
<reference key="3">
    <citation type="journal article" date="2005" name="Evol. Dev.">
        <title>Genomic annotation and transcriptome analysis of the zebrafish (Danio rerio) hox complex with description of a novel member, hoxb13a.</title>
        <authorList>
            <person name="Corredor-Adamez M."/>
            <person name="Welten M.C.M."/>
            <person name="Spaink H.P."/>
            <person name="Jeffery J.E."/>
            <person name="Schoon R.T."/>
            <person name="de Bakker M.A.G."/>
            <person name="Bagowski C.P."/>
            <person name="Meijer A.H."/>
            <person name="Verbeek F.J."/>
            <person name="Richardson M.K."/>
        </authorList>
    </citation>
    <scope>NUCLEOTIDE SEQUENCE [MRNA] OF 45-161</scope>
    <source>
        <strain>Tuebingen</strain>
    </source>
</reference>
<reference key="4">
    <citation type="journal article" date="1998" name="Development">
        <title>Zebrafish hox genes: genomic organization and modified colinear expression patterns in the trunk.</title>
        <authorList>
            <person name="Prince V.E."/>
            <person name="Joly L."/>
            <person name="Ekker M."/>
            <person name="Ho R.K."/>
        </authorList>
    </citation>
    <scope>NUCLEOTIDE SEQUENCE [MRNA] OF 159-224</scope>
    <scope>DEVELOPMENTAL STAGE</scope>
    <source>
        <tissue>Embryo</tissue>
    </source>
</reference>
<comment type="function">
    <text evidence="1">Sequence-specific transcription factor which is part of a developmental regulatory system that provides cells with specific positional identities on the anterior-posterior axis.</text>
</comment>
<comment type="subcellular location">
    <subcellularLocation>
        <location evidence="2">Nucleus</location>
    </subcellularLocation>
</comment>
<comment type="developmental stage">
    <text evidence="3">At the 10-somite stage, expressed in the paraxial mesoderm with an anterior expression limit at somite 6. At the 20-somite stage, expressed in the developing CNS with an anterior expression limit adjacent to the somite 2/somite 3 boundary, with expression decreasing towards the posterior.</text>
</comment>
<comment type="similarity">
    <text evidence="4">Belongs to the Antp homeobox family.</text>
</comment>
<name>HXB6B_DANRE</name>
<sequence length="224" mass="25468">MSSYFVNSTFPVSLPGGQESFLGQIPLYSSGYTDSLRHYPSATFGATNVQDKVYTSSYYQQAGGVFGRSGSTSACDYSTPNIYRTADRSCAIGSLEDSLVLTQDQCKTDCTEQGTERYFSTEDKPCTPVYPWMQRMNSCNGMPGSTGRRGRQTYTRFQTLELEKEFHFNRYLTRRRRIEISHALCLTERQIKIWFQNRRMKWKKENKAVNSAKVSDEEDGGKAG</sequence>
<gene>
    <name type="primary">hoxb6b</name>
    <name type="synonym">hoxa7</name>
</gene>